<keyword id="KW-0963">Cytoplasm</keyword>
<keyword id="KW-0238">DNA-binding</keyword>
<keyword id="KW-0677">Repeat</keyword>
<keyword id="KW-0804">Transcription</keyword>
<keyword id="KW-0805">Transcription regulation</keyword>
<name>MRAZ_SHESM</name>
<dbReference type="EMBL" id="CP000446">
    <property type="protein sequence ID" value="ABI40643.1"/>
    <property type="molecule type" value="Genomic_DNA"/>
</dbReference>
<dbReference type="RefSeq" id="WP_011624306.1">
    <property type="nucleotide sequence ID" value="NC_008321.1"/>
</dbReference>
<dbReference type="SMR" id="Q0HE74"/>
<dbReference type="KEGG" id="she:Shewmr4_3579"/>
<dbReference type="HOGENOM" id="CLU_107907_2_0_6"/>
<dbReference type="GO" id="GO:0005737">
    <property type="term" value="C:cytoplasm"/>
    <property type="evidence" value="ECO:0007669"/>
    <property type="project" value="UniProtKB-UniRule"/>
</dbReference>
<dbReference type="GO" id="GO:0009295">
    <property type="term" value="C:nucleoid"/>
    <property type="evidence" value="ECO:0007669"/>
    <property type="project" value="UniProtKB-SubCell"/>
</dbReference>
<dbReference type="GO" id="GO:0003700">
    <property type="term" value="F:DNA-binding transcription factor activity"/>
    <property type="evidence" value="ECO:0007669"/>
    <property type="project" value="UniProtKB-UniRule"/>
</dbReference>
<dbReference type="GO" id="GO:0000976">
    <property type="term" value="F:transcription cis-regulatory region binding"/>
    <property type="evidence" value="ECO:0007669"/>
    <property type="project" value="TreeGrafter"/>
</dbReference>
<dbReference type="GO" id="GO:2000143">
    <property type="term" value="P:negative regulation of DNA-templated transcription initiation"/>
    <property type="evidence" value="ECO:0007669"/>
    <property type="project" value="TreeGrafter"/>
</dbReference>
<dbReference type="CDD" id="cd16321">
    <property type="entry name" value="MraZ_C"/>
    <property type="match status" value="1"/>
</dbReference>
<dbReference type="CDD" id="cd16320">
    <property type="entry name" value="MraZ_N"/>
    <property type="match status" value="1"/>
</dbReference>
<dbReference type="FunFam" id="3.40.1550.20:FF:000001">
    <property type="entry name" value="Transcriptional regulator MraZ"/>
    <property type="match status" value="1"/>
</dbReference>
<dbReference type="Gene3D" id="3.40.1550.20">
    <property type="entry name" value="Transcriptional regulator MraZ domain"/>
    <property type="match status" value="1"/>
</dbReference>
<dbReference type="HAMAP" id="MF_01008">
    <property type="entry name" value="MraZ"/>
    <property type="match status" value="1"/>
</dbReference>
<dbReference type="InterPro" id="IPR003444">
    <property type="entry name" value="MraZ"/>
</dbReference>
<dbReference type="InterPro" id="IPR035644">
    <property type="entry name" value="MraZ_C"/>
</dbReference>
<dbReference type="InterPro" id="IPR020603">
    <property type="entry name" value="MraZ_dom"/>
</dbReference>
<dbReference type="InterPro" id="IPR035642">
    <property type="entry name" value="MraZ_N"/>
</dbReference>
<dbReference type="InterPro" id="IPR038619">
    <property type="entry name" value="MraZ_sf"/>
</dbReference>
<dbReference type="InterPro" id="IPR007159">
    <property type="entry name" value="SpoVT-AbrB_dom"/>
</dbReference>
<dbReference type="InterPro" id="IPR037914">
    <property type="entry name" value="SpoVT-AbrB_sf"/>
</dbReference>
<dbReference type="NCBIfam" id="TIGR00242">
    <property type="entry name" value="division/cell wall cluster transcriptional repressor MraZ"/>
    <property type="match status" value="1"/>
</dbReference>
<dbReference type="PANTHER" id="PTHR34701">
    <property type="entry name" value="TRANSCRIPTIONAL REGULATOR MRAZ"/>
    <property type="match status" value="1"/>
</dbReference>
<dbReference type="PANTHER" id="PTHR34701:SF1">
    <property type="entry name" value="TRANSCRIPTIONAL REGULATOR MRAZ"/>
    <property type="match status" value="1"/>
</dbReference>
<dbReference type="Pfam" id="PF02381">
    <property type="entry name" value="MraZ"/>
    <property type="match status" value="2"/>
</dbReference>
<dbReference type="SUPFAM" id="SSF89447">
    <property type="entry name" value="AbrB/MazE/MraZ-like"/>
    <property type="match status" value="1"/>
</dbReference>
<dbReference type="PROSITE" id="PS51740">
    <property type="entry name" value="SPOVT_ABRB"/>
    <property type="match status" value="2"/>
</dbReference>
<evidence type="ECO:0000255" key="1">
    <source>
        <dbReference type="HAMAP-Rule" id="MF_01008"/>
    </source>
</evidence>
<evidence type="ECO:0000255" key="2">
    <source>
        <dbReference type="PROSITE-ProRule" id="PRU01076"/>
    </source>
</evidence>
<gene>
    <name evidence="1" type="primary">mraZ</name>
    <name type="ordered locus">Shewmr4_3579</name>
</gene>
<reference key="1">
    <citation type="submission" date="2006-08" db="EMBL/GenBank/DDBJ databases">
        <title>Complete sequence of Shewanella sp. MR-4.</title>
        <authorList>
            <consortium name="US DOE Joint Genome Institute"/>
            <person name="Copeland A."/>
            <person name="Lucas S."/>
            <person name="Lapidus A."/>
            <person name="Barry K."/>
            <person name="Detter J.C."/>
            <person name="Glavina del Rio T."/>
            <person name="Hammon N."/>
            <person name="Israni S."/>
            <person name="Dalin E."/>
            <person name="Tice H."/>
            <person name="Pitluck S."/>
            <person name="Kiss H."/>
            <person name="Brettin T."/>
            <person name="Bruce D."/>
            <person name="Han C."/>
            <person name="Tapia R."/>
            <person name="Gilna P."/>
            <person name="Schmutz J."/>
            <person name="Larimer F."/>
            <person name="Land M."/>
            <person name="Hauser L."/>
            <person name="Kyrpides N."/>
            <person name="Mikhailova N."/>
            <person name="Nealson K."/>
            <person name="Konstantinidis K."/>
            <person name="Klappenbach J."/>
            <person name="Tiedje J."/>
            <person name="Richardson P."/>
        </authorList>
    </citation>
    <scope>NUCLEOTIDE SEQUENCE [LARGE SCALE GENOMIC DNA]</scope>
    <source>
        <strain>MR-4</strain>
    </source>
</reference>
<proteinExistence type="inferred from homology"/>
<accession>Q0HE74</accession>
<comment type="subunit">
    <text evidence="1">Forms oligomers.</text>
</comment>
<comment type="subcellular location">
    <subcellularLocation>
        <location evidence="1">Cytoplasm</location>
        <location evidence="1">Nucleoid</location>
    </subcellularLocation>
</comment>
<comment type="similarity">
    <text evidence="1">Belongs to the MraZ family.</text>
</comment>
<feature type="chain" id="PRO_1000062936" description="Transcriptional regulator MraZ">
    <location>
        <begin position="1"/>
        <end position="152"/>
    </location>
</feature>
<feature type="domain" description="SpoVT-AbrB 1" evidence="2">
    <location>
        <begin position="5"/>
        <end position="52"/>
    </location>
</feature>
<feature type="domain" description="SpoVT-AbrB 2" evidence="2">
    <location>
        <begin position="81"/>
        <end position="124"/>
    </location>
</feature>
<sequence>MFRGASAINLDTKGRIAIPVRYREPLQLEHQGRIVITVDIQSACLLLYPIHEWELIEAKLLKLSDTDKTQRSLKRMLLGYAHEVELDGNGRILLPPPLRQYANLDKRIMLVGQLNKFELWDEQAWLQQIDECQETIRSEELANNERLADFSL</sequence>
<protein>
    <recommendedName>
        <fullName>Transcriptional regulator MraZ</fullName>
    </recommendedName>
</protein>
<organism>
    <name type="scientific">Shewanella sp. (strain MR-4)</name>
    <dbReference type="NCBI Taxonomy" id="60480"/>
    <lineage>
        <taxon>Bacteria</taxon>
        <taxon>Pseudomonadati</taxon>
        <taxon>Pseudomonadota</taxon>
        <taxon>Gammaproteobacteria</taxon>
        <taxon>Alteromonadales</taxon>
        <taxon>Shewanellaceae</taxon>
        <taxon>Shewanella</taxon>
    </lineage>
</organism>